<proteinExistence type="inferred from homology"/>
<reference key="1">
    <citation type="submission" date="2009-03" db="EMBL/GenBank/DDBJ databases">
        <title>Comparison of the complete genome sequences of Rhodococcus erythropolis PR4 and Rhodococcus opacus B4.</title>
        <authorList>
            <person name="Takarada H."/>
            <person name="Sekine M."/>
            <person name="Hosoyama A."/>
            <person name="Yamada R."/>
            <person name="Fujisawa T."/>
            <person name="Omata S."/>
            <person name="Shimizu A."/>
            <person name="Tsukatani N."/>
            <person name="Tanikawa S."/>
            <person name="Fujita N."/>
            <person name="Harayama S."/>
        </authorList>
    </citation>
    <scope>NUCLEOTIDE SEQUENCE [LARGE SCALE GENOMIC DNA]</scope>
    <source>
        <strain>B4</strain>
    </source>
</reference>
<gene>
    <name evidence="1" type="primary">rplM</name>
    <name type="ordered locus">ROP_62300</name>
</gene>
<feature type="chain" id="PRO_1000166881" description="Large ribosomal subunit protein uL13">
    <location>
        <begin position="1"/>
        <end position="147"/>
    </location>
</feature>
<comment type="function">
    <text evidence="1">This protein is one of the early assembly proteins of the 50S ribosomal subunit, although it is not seen to bind rRNA by itself. It is important during the early stages of 50S assembly.</text>
</comment>
<comment type="subunit">
    <text evidence="1">Part of the 50S ribosomal subunit.</text>
</comment>
<comment type="similarity">
    <text evidence="1">Belongs to the universal ribosomal protein uL13 family.</text>
</comment>
<sequence length="147" mass="15882">MSTYTPKAGDVTRTWHVIDATDVVLGRLAVQAANLLRGKHKPTFAPHVDGGDFVVIINADKVAISGNKREGKFLYHHSGHPGGLKSRSVGEVLDKNPDRLVEKAVVGMLPKNKLGRAISSKLKVYAGPNHPHAAQQPVPFEIKQVAQ</sequence>
<keyword id="KW-0687">Ribonucleoprotein</keyword>
<keyword id="KW-0689">Ribosomal protein</keyword>
<accession>C1B056</accession>
<protein>
    <recommendedName>
        <fullName evidence="1">Large ribosomal subunit protein uL13</fullName>
    </recommendedName>
    <alternativeName>
        <fullName evidence="2">50S ribosomal protein L13</fullName>
    </alternativeName>
</protein>
<organism>
    <name type="scientific">Rhodococcus opacus (strain B4)</name>
    <dbReference type="NCBI Taxonomy" id="632772"/>
    <lineage>
        <taxon>Bacteria</taxon>
        <taxon>Bacillati</taxon>
        <taxon>Actinomycetota</taxon>
        <taxon>Actinomycetes</taxon>
        <taxon>Mycobacteriales</taxon>
        <taxon>Nocardiaceae</taxon>
        <taxon>Rhodococcus</taxon>
    </lineage>
</organism>
<name>RL13_RHOOB</name>
<dbReference type="EMBL" id="AP011115">
    <property type="protein sequence ID" value="BAH54477.1"/>
    <property type="molecule type" value="Genomic_DNA"/>
</dbReference>
<dbReference type="RefSeq" id="WP_015889940.1">
    <property type="nucleotide sequence ID" value="NC_012522.1"/>
</dbReference>
<dbReference type="SMR" id="C1B056"/>
<dbReference type="STRING" id="632772.ROP_62300"/>
<dbReference type="KEGG" id="rop:ROP_62300"/>
<dbReference type="PATRIC" id="fig|632772.20.peg.6506"/>
<dbReference type="HOGENOM" id="CLU_082184_2_2_11"/>
<dbReference type="OrthoDB" id="9801330at2"/>
<dbReference type="Proteomes" id="UP000002212">
    <property type="component" value="Chromosome"/>
</dbReference>
<dbReference type="GO" id="GO:0022625">
    <property type="term" value="C:cytosolic large ribosomal subunit"/>
    <property type="evidence" value="ECO:0007669"/>
    <property type="project" value="TreeGrafter"/>
</dbReference>
<dbReference type="GO" id="GO:0003729">
    <property type="term" value="F:mRNA binding"/>
    <property type="evidence" value="ECO:0007669"/>
    <property type="project" value="TreeGrafter"/>
</dbReference>
<dbReference type="GO" id="GO:0003735">
    <property type="term" value="F:structural constituent of ribosome"/>
    <property type="evidence" value="ECO:0007669"/>
    <property type="project" value="InterPro"/>
</dbReference>
<dbReference type="GO" id="GO:0017148">
    <property type="term" value="P:negative regulation of translation"/>
    <property type="evidence" value="ECO:0007669"/>
    <property type="project" value="TreeGrafter"/>
</dbReference>
<dbReference type="GO" id="GO:0006412">
    <property type="term" value="P:translation"/>
    <property type="evidence" value="ECO:0007669"/>
    <property type="project" value="UniProtKB-UniRule"/>
</dbReference>
<dbReference type="CDD" id="cd00392">
    <property type="entry name" value="Ribosomal_L13"/>
    <property type="match status" value="1"/>
</dbReference>
<dbReference type="FunFam" id="3.90.1180.10:FF:000001">
    <property type="entry name" value="50S ribosomal protein L13"/>
    <property type="match status" value="1"/>
</dbReference>
<dbReference type="Gene3D" id="3.90.1180.10">
    <property type="entry name" value="Ribosomal protein L13"/>
    <property type="match status" value="1"/>
</dbReference>
<dbReference type="HAMAP" id="MF_01366">
    <property type="entry name" value="Ribosomal_uL13"/>
    <property type="match status" value="1"/>
</dbReference>
<dbReference type="InterPro" id="IPR005822">
    <property type="entry name" value="Ribosomal_uL13"/>
</dbReference>
<dbReference type="InterPro" id="IPR005823">
    <property type="entry name" value="Ribosomal_uL13_bac-type"/>
</dbReference>
<dbReference type="InterPro" id="IPR023563">
    <property type="entry name" value="Ribosomal_uL13_CS"/>
</dbReference>
<dbReference type="InterPro" id="IPR036899">
    <property type="entry name" value="Ribosomal_uL13_sf"/>
</dbReference>
<dbReference type="NCBIfam" id="TIGR01066">
    <property type="entry name" value="rplM_bact"/>
    <property type="match status" value="1"/>
</dbReference>
<dbReference type="PANTHER" id="PTHR11545:SF2">
    <property type="entry name" value="LARGE RIBOSOMAL SUBUNIT PROTEIN UL13M"/>
    <property type="match status" value="1"/>
</dbReference>
<dbReference type="PANTHER" id="PTHR11545">
    <property type="entry name" value="RIBOSOMAL PROTEIN L13"/>
    <property type="match status" value="1"/>
</dbReference>
<dbReference type="Pfam" id="PF00572">
    <property type="entry name" value="Ribosomal_L13"/>
    <property type="match status" value="1"/>
</dbReference>
<dbReference type="PIRSF" id="PIRSF002181">
    <property type="entry name" value="Ribosomal_L13"/>
    <property type="match status" value="1"/>
</dbReference>
<dbReference type="SUPFAM" id="SSF52161">
    <property type="entry name" value="Ribosomal protein L13"/>
    <property type="match status" value="1"/>
</dbReference>
<dbReference type="PROSITE" id="PS00783">
    <property type="entry name" value="RIBOSOMAL_L13"/>
    <property type="match status" value="1"/>
</dbReference>
<evidence type="ECO:0000255" key="1">
    <source>
        <dbReference type="HAMAP-Rule" id="MF_01366"/>
    </source>
</evidence>
<evidence type="ECO:0000305" key="2"/>